<feature type="chain" id="PRO_1000212098" description="Urocanate hydratase">
    <location>
        <begin position="1"/>
        <end position="559"/>
    </location>
</feature>
<feature type="active site" evidence="1">
    <location>
        <position position="412"/>
    </location>
</feature>
<feature type="binding site" evidence="1">
    <location>
        <begin position="54"/>
        <end position="55"/>
    </location>
    <ligand>
        <name>NAD(+)</name>
        <dbReference type="ChEBI" id="CHEBI:57540"/>
    </ligand>
</feature>
<feature type="binding site" evidence="1">
    <location>
        <position position="132"/>
    </location>
    <ligand>
        <name>NAD(+)</name>
        <dbReference type="ChEBI" id="CHEBI:57540"/>
    </ligand>
</feature>
<feature type="binding site" evidence="1">
    <location>
        <begin position="178"/>
        <end position="180"/>
    </location>
    <ligand>
        <name>NAD(+)</name>
        <dbReference type="ChEBI" id="CHEBI:57540"/>
    </ligand>
</feature>
<feature type="binding site" evidence="1">
    <location>
        <position position="198"/>
    </location>
    <ligand>
        <name>NAD(+)</name>
        <dbReference type="ChEBI" id="CHEBI:57540"/>
    </ligand>
</feature>
<feature type="binding site" evidence="1">
    <location>
        <position position="203"/>
    </location>
    <ligand>
        <name>NAD(+)</name>
        <dbReference type="ChEBI" id="CHEBI:57540"/>
    </ligand>
</feature>
<feature type="binding site" evidence="1">
    <location>
        <begin position="244"/>
        <end position="245"/>
    </location>
    <ligand>
        <name>NAD(+)</name>
        <dbReference type="ChEBI" id="CHEBI:57540"/>
    </ligand>
</feature>
<feature type="binding site" evidence="1">
    <location>
        <begin position="265"/>
        <end position="269"/>
    </location>
    <ligand>
        <name>NAD(+)</name>
        <dbReference type="ChEBI" id="CHEBI:57540"/>
    </ligand>
</feature>
<feature type="binding site" evidence="1">
    <location>
        <begin position="275"/>
        <end position="276"/>
    </location>
    <ligand>
        <name>NAD(+)</name>
        <dbReference type="ChEBI" id="CHEBI:57540"/>
    </ligand>
</feature>
<feature type="binding site" evidence="1">
    <location>
        <position position="324"/>
    </location>
    <ligand>
        <name>NAD(+)</name>
        <dbReference type="ChEBI" id="CHEBI:57540"/>
    </ligand>
</feature>
<feature type="binding site" evidence="1">
    <location>
        <position position="494"/>
    </location>
    <ligand>
        <name>NAD(+)</name>
        <dbReference type="ChEBI" id="CHEBI:57540"/>
    </ligand>
</feature>
<evidence type="ECO:0000255" key="1">
    <source>
        <dbReference type="HAMAP-Rule" id="MF_00577"/>
    </source>
</evidence>
<sequence length="559" mass="61465">MREAFHKYRDIEIRAPRGTALNARSWLCEAPLRLLMNNLDPEVAENPKELVVYGGIGRAARNWECFDRIVECLKNLEEDETLLIQSGKPVGVFRTQRDAPRVLIANSNLVPHWATWEHFHELDARGLAMFGQMTAGSWIYIGSQGIVQGTFETFVEAGRQHYGGDLRGRWLLSAGLGGMGGAQPLAATLAGASALLVECQQSRIDFRLKTGYLDEQARDLDDALARIARYRGEGRAVSVGLCANAADILPELVRRGVRPDLVTDQTSAHDPLNGYLPRGWSWAEYRERAAREPAATVAAAKRSMAGHVRAMLAFHERGVPVFDYGNNIRQMARDEGVENAFDFPGFVPAYIRPLFCRGIGPFRWVALSGEAEDIYRTDARVKELIPDDPHLHRWLGMARERIRFQGLPARICWVGLGQRARLGLAFNEMVRRGELKAPVVIGRDHLDSGSVASPNRETEAMRDGSDAVSDWPLLNALLNTASGATWVSLHHGGGVGMGYSQHAGVAIVCDGTDEAAARIARVLHNDPASGVMRHADAGYPEAIACARERGLKLPMLGDA</sequence>
<protein>
    <recommendedName>
        <fullName evidence="1">Urocanate hydratase</fullName>
        <shortName evidence="1">Urocanase</shortName>
        <ecNumber evidence="1">4.2.1.49</ecNumber>
    </recommendedName>
    <alternativeName>
        <fullName evidence="1">Imidazolonepropionate hydrolase</fullName>
    </alternativeName>
</protein>
<accession>C1DJM5</accession>
<dbReference type="EC" id="4.2.1.49" evidence="1"/>
<dbReference type="EMBL" id="CP001157">
    <property type="protein sequence ID" value="ACO78794.1"/>
    <property type="molecule type" value="Genomic_DNA"/>
</dbReference>
<dbReference type="RefSeq" id="WP_012701185.1">
    <property type="nucleotide sequence ID" value="NC_012560.1"/>
</dbReference>
<dbReference type="SMR" id="C1DJM5"/>
<dbReference type="STRING" id="322710.Avin_26180"/>
<dbReference type="EnsemblBacteria" id="ACO78794">
    <property type="protein sequence ID" value="ACO78794"/>
    <property type="gene ID" value="Avin_26180"/>
</dbReference>
<dbReference type="GeneID" id="88185764"/>
<dbReference type="KEGG" id="avn:Avin_26180"/>
<dbReference type="eggNOG" id="COG2987">
    <property type="taxonomic scope" value="Bacteria"/>
</dbReference>
<dbReference type="HOGENOM" id="CLU_018868_0_1_6"/>
<dbReference type="OrthoDB" id="9764874at2"/>
<dbReference type="UniPathway" id="UPA00379">
    <property type="reaction ID" value="UER00550"/>
</dbReference>
<dbReference type="Proteomes" id="UP000002424">
    <property type="component" value="Chromosome"/>
</dbReference>
<dbReference type="GO" id="GO:0005737">
    <property type="term" value="C:cytoplasm"/>
    <property type="evidence" value="ECO:0007669"/>
    <property type="project" value="UniProtKB-SubCell"/>
</dbReference>
<dbReference type="GO" id="GO:0016153">
    <property type="term" value="F:urocanate hydratase activity"/>
    <property type="evidence" value="ECO:0007669"/>
    <property type="project" value="UniProtKB-UniRule"/>
</dbReference>
<dbReference type="GO" id="GO:0019556">
    <property type="term" value="P:L-histidine catabolic process to glutamate and formamide"/>
    <property type="evidence" value="ECO:0007669"/>
    <property type="project" value="UniProtKB-UniPathway"/>
</dbReference>
<dbReference type="GO" id="GO:0019557">
    <property type="term" value="P:L-histidine catabolic process to glutamate and formate"/>
    <property type="evidence" value="ECO:0007669"/>
    <property type="project" value="UniProtKB-UniPathway"/>
</dbReference>
<dbReference type="FunFam" id="3.40.50.10730:FF:000001">
    <property type="entry name" value="Urocanate hydratase"/>
    <property type="match status" value="1"/>
</dbReference>
<dbReference type="Gene3D" id="3.40.50.10730">
    <property type="entry name" value="Urocanase like domains"/>
    <property type="match status" value="1"/>
</dbReference>
<dbReference type="Gene3D" id="3.40.1770.10">
    <property type="entry name" value="Urocanase superfamily"/>
    <property type="match status" value="1"/>
</dbReference>
<dbReference type="HAMAP" id="MF_00577">
    <property type="entry name" value="HutU"/>
    <property type="match status" value="1"/>
</dbReference>
<dbReference type="InterPro" id="IPR055351">
    <property type="entry name" value="Urocanase"/>
</dbReference>
<dbReference type="InterPro" id="IPR023637">
    <property type="entry name" value="Urocanase-like"/>
</dbReference>
<dbReference type="InterPro" id="IPR035401">
    <property type="entry name" value="Urocanase_C"/>
</dbReference>
<dbReference type="InterPro" id="IPR038364">
    <property type="entry name" value="Urocanase_central_sf"/>
</dbReference>
<dbReference type="InterPro" id="IPR023636">
    <property type="entry name" value="Urocanase_CS"/>
</dbReference>
<dbReference type="InterPro" id="IPR035400">
    <property type="entry name" value="Urocanase_N"/>
</dbReference>
<dbReference type="InterPro" id="IPR035085">
    <property type="entry name" value="Urocanase_Rossmann-like"/>
</dbReference>
<dbReference type="InterPro" id="IPR036190">
    <property type="entry name" value="Urocanase_sf"/>
</dbReference>
<dbReference type="NCBIfam" id="TIGR01228">
    <property type="entry name" value="hutU"/>
    <property type="match status" value="1"/>
</dbReference>
<dbReference type="NCBIfam" id="NF003820">
    <property type="entry name" value="PRK05414.1"/>
    <property type="match status" value="1"/>
</dbReference>
<dbReference type="PANTHER" id="PTHR12216">
    <property type="entry name" value="UROCANATE HYDRATASE"/>
    <property type="match status" value="1"/>
</dbReference>
<dbReference type="PANTHER" id="PTHR12216:SF4">
    <property type="entry name" value="UROCANATE HYDRATASE"/>
    <property type="match status" value="1"/>
</dbReference>
<dbReference type="Pfam" id="PF01175">
    <property type="entry name" value="Urocanase"/>
    <property type="match status" value="1"/>
</dbReference>
<dbReference type="Pfam" id="PF17392">
    <property type="entry name" value="Urocanase_C"/>
    <property type="match status" value="1"/>
</dbReference>
<dbReference type="Pfam" id="PF17391">
    <property type="entry name" value="Urocanase_N"/>
    <property type="match status" value="1"/>
</dbReference>
<dbReference type="PIRSF" id="PIRSF001423">
    <property type="entry name" value="Urocanate_hydrat"/>
    <property type="match status" value="1"/>
</dbReference>
<dbReference type="SUPFAM" id="SSF111326">
    <property type="entry name" value="Urocanase"/>
    <property type="match status" value="1"/>
</dbReference>
<dbReference type="PROSITE" id="PS01233">
    <property type="entry name" value="UROCANASE"/>
    <property type="match status" value="1"/>
</dbReference>
<name>HUTU_AZOVD</name>
<keyword id="KW-0963">Cytoplasm</keyword>
<keyword id="KW-0369">Histidine metabolism</keyword>
<keyword id="KW-0456">Lyase</keyword>
<keyword id="KW-0520">NAD</keyword>
<organism>
    <name type="scientific">Azotobacter vinelandii (strain DJ / ATCC BAA-1303)</name>
    <dbReference type="NCBI Taxonomy" id="322710"/>
    <lineage>
        <taxon>Bacteria</taxon>
        <taxon>Pseudomonadati</taxon>
        <taxon>Pseudomonadota</taxon>
        <taxon>Gammaproteobacteria</taxon>
        <taxon>Pseudomonadales</taxon>
        <taxon>Pseudomonadaceae</taxon>
        <taxon>Azotobacter</taxon>
    </lineage>
</organism>
<reference key="1">
    <citation type="journal article" date="2009" name="J. Bacteriol.">
        <title>Genome sequence of Azotobacter vinelandii, an obligate aerobe specialized to support diverse anaerobic metabolic processes.</title>
        <authorList>
            <person name="Setubal J.C."/>
            <person name="Dos Santos P."/>
            <person name="Goldman B.S."/>
            <person name="Ertesvaag H."/>
            <person name="Espin G."/>
            <person name="Rubio L.M."/>
            <person name="Valla S."/>
            <person name="Almeida N.F."/>
            <person name="Balasubramanian D."/>
            <person name="Cromes L."/>
            <person name="Curatti L."/>
            <person name="Du Z."/>
            <person name="Godsy E."/>
            <person name="Goodner B."/>
            <person name="Hellner-Burris K."/>
            <person name="Hernandez J.A."/>
            <person name="Houmiel K."/>
            <person name="Imperial J."/>
            <person name="Kennedy C."/>
            <person name="Larson T.J."/>
            <person name="Latreille P."/>
            <person name="Ligon L.S."/>
            <person name="Lu J."/>
            <person name="Maerk M."/>
            <person name="Miller N.M."/>
            <person name="Norton S."/>
            <person name="O'Carroll I.P."/>
            <person name="Paulsen I."/>
            <person name="Raulfs E.C."/>
            <person name="Roemer R."/>
            <person name="Rosser J."/>
            <person name="Segura D."/>
            <person name="Slater S."/>
            <person name="Stricklin S.L."/>
            <person name="Studholme D.J."/>
            <person name="Sun J."/>
            <person name="Viana C.J."/>
            <person name="Wallin E."/>
            <person name="Wang B."/>
            <person name="Wheeler C."/>
            <person name="Zhu H."/>
            <person name="Dean D.R."/>
            <person name="Dixon R."/>
            <person name="Wood D."/>
        </authorList>
    </citation>
    <scope>NUCLEOTIDE SEQUENCE [LARGE SCALE GENOMIC DNA]</scope>
    <source>
        <strain>DJ / ATCC BAA-1303</strain>
    </source>
</reference>
<gene>
    <name evidence="1" type="primary">hutU</name>
    <name type="ordered locus">Avin_26180</name>
</gene>
<comment type="function">
    <text evidence="1">Catalyzes the conversion of urocanate to 4-imidazolone-5-propionate.</text>
</comment>
<comment type="catalytic activity">
    <reaction evidence="1">
        <text>4-imidazolone-5-propanoate = trans-urocanate + H2O</text>
        <dbReference type="Rhea" id="RHEA:13101"/>
        <dbReference type="ChEBI" id="CHEBI:15377"/>
        <dbReference type="ChEBI" id="CHEBI:17771"/>
        <dbReference type="ChEBI" id="CHEBI:77893"/>
        <dbReference type="EC" id="4.2.1.49"/>
    </reaction>
</comment>
<comment type="cofactor">
    <cofactor evidence="1">
        <name>NAD(+)</name>
        <dbReference type="ChEBI" id="CHEBI:57540"/>
    </cofactor>
    <text evidence="1">Binds 1 NAD(+) per subunit.</text>
</comment>
<comment type="pathway">
    <text evidence="1">Amino-acid degradation; L-histidine degradation into L-glutamate; N-formimidoyl-L-glutamate from L-histidine: step 2/3.</text>
</comment>
<comment type="subcellular location">
    <subcellularLocation>
        <location evidence="1">Cytoplasm</location>
    </subcellularLocation>
</comment>
<comment type="similarity">
    <text evidence="1">Belongs to the urocanase family.</text>
</comment>
<proteinExistence type="inferred from homology"/>